<name>OLFM_AQUCT</name>
<dbReference type="EMBL" id="L13595">
    <property type="protein sequence ID" value="AAA49527.1"/>
    <property type="molecule type" value="mRNA"/>
</dbReference>
<dbReference type="PIR" id="A47442">
    <property type="entry name" value="A47442"/>
</dbReference>
<dbReference type="SMR" id="Q07081"/>
<dbReference type="iPTMnet" id="Q07081"/>
<dbReference type="GO" id="GO:0005615">
    <property type="term" value="C:extracellular space"/>
    <property type="evidence" value="ECO:0007669"/>
    <property type="project" value="TreeGrafter"/>
</dbReference>
<dbReference type="GO" id="GO:0007608">
    <property type="term" value="P:sensory perception of smell"/>
    <property type="evidence" value="ECO:0007669"/>
    <property type="project" value="UniProtKB-KW"/>
</dbReference>
<dbReference type="GO" id="GO:0007165">
    <property type="term" value="P:signal transduction"/>
    <property type="evidence" value="ECO:0007669"/>
    <property type="project" value="TreeGrafter"/>
</dbReference>
<dbReference type="InterPro" id="IPR003112">
    <property type="entry name" value="Olfac-like_dom"/>
</dbReference>
<dbReference type="InterPro" id="IPR050605">
    <property type="entry name" value="Olfactomedin-like_domain"/>
</dbReference>
<dbReference type="PANTHER" id="PTHR23192:SF89">
    <property type="entry name" value="OLFACTOMEDIN"/>
    <property type="match status" value="1"/>
</dbReference>
<dbReference type="PANTHER" id="PTHR23192">
    <property type="entry name" value="OLFACTOMEDIN-RELATED"/>
    <property type="match status" value="1"/>
</dbReference>
<dbReference type="Pfam" id="PF02191">
    <property type="entry name" value="OLF"/>
    <property type="match status" value="1"/>
</dbReference>
<dbReference type="SMART" id="SM00284">
    <property type="entry name" value="OLF"/>
    <property type="match status" value="1"/>
</dbReference>
<dbReference type="PROSITE" id="PS51132">
    <property type="entry name" value="OLF"/>
    <property type="match status" value="1"/>
</dbReference>
<keyword id="KW-0903">Direct protein sequencing</keyword>
<keyword id="KW-1015">Disulfide bond</keyword>
<keyword id="KW-0325">Glycoprotein</keyword>
<keyword id="KW-0552">Olfaction</keyword>
<keyword id="KW-0964">Secreted</keyword>
<keyword id="KW-0716">Sensory transduction</keyword>
<keyword id="KW-0732">Signal</keyword>
<evidence type="ECO:0000255" key="1"/>
<evidence type="ECO:0000255" key="2">
    <source>
        <dbReference type="PROSITE-ProRule" id="PRU00446"/>
    </source>
</evidence>
<evidence type="ECO:0000269" key="3">
    <source>
    </source>
</evidence>
<evidence type="ECO:0000269" key="4">
    <source>
    </source>
</evidence>
<organism>
    <name type="scientific">Aquarana catesbeiana</name>
    <name type="common">American bullfrog</name>
    <name type="synonym">Rana catesbeiana</name>
    <dbReference type="NCBI Taxonomy" id="8400"/>
    <lineage>
        <taxon>Eukaryota</taxon>
        <taxon>Metazoa</taxon>
        <taxon>Chordata</taxon>
        <taxon>Craniata</taxon>
        <taxon>Vertebrata</taxon>
        <taxon>Euteleostomi</taxon>
        <taxon>Amphibia</taxon>
        <taxon>Batrachia</taxon>
        <taxon>Anura</taxon>
        <taxon>Neobatrachia</taxon>
        <taxon>Ranoidea</taxon>
        <taxon>Ranidae</taxon>
        <taxon>Aquarana</taxon>
    </lineage>
</organism>
<accession>Q07081</accession>
<sequence length="464" mass="52572">MYICLLTLVLIHAAAAFVAQNATGILAGKDHCVCEVLLPDSSFPAKRVGALEDETIRLSNRVEDEMQKLEEQDIILDTYSEKIINLTRRVEYLEKLHPESLVEISFEVLKREIRELEMYISAMRVKPNGNSVQVETLYNEVKNMSKTVGQLETLDKNNVLQAKREIVNLKKRLVDCEKNLKAKPSLMVPLGSCQHQGLAHISKPNLMQLNWKGNAYKSGAWGKDAAWNTTKKSLYWVAPLNTDGRVLESIRIYPSMSDLQMYKNPIDLPLSMLIKNKLNNTFAGQGAGVVVHNNNLYYNCFNSHDMCRASLTSGVYQKKPLLNALFNNRFSYAGTMFQDMDFSSDEKGLWVIFTTEKSAGKIVVGKVNVATFTVDNIWITTQNKSDASNAFMICGVLYVTRSLGPKMEEVFYMFDTKTGKEGHLSIMMEKMAEKVHSLSYNSNDRKLYMFSEGYLLHYDIALKP</sequence>
<feature type="signal peptide" evidence="3 4">
    <location>
        <begin position="1"/>
        <end position="16"/>
    </location>
</feature>
<feature type="chain" id="PRO_0000020089" description="Olfactomedin">
    <location>
        <begin position="17"/>
        <end position="464"/>
    </location>
</feature>
<feature type="domain" description="Olfactomedin-like" evidence="2">
    <location>
        <begin position="192"/>
        <end position="464"/>
    </location>
</feature>
<feature type="glycosylation site" description="N-linked (GlcNAc...) asparagine" evidence="3">
    <location>
        <position position="21"/>
    </location>
</feature>
<feature type="glycosylation site" description="N-linked (GlcNAc...) asparagine" evidence="1">
    <location>
        <position position="85"/>
    </location>
</feature>
<feature type="glycosylation site" description="N-linked (GlcNAc...) asparagine" evidence="1">
    <location>
        <position position="143"/>
    </location>
</feature>
<feature type="glycosylation site" description="N-linked (GlcNAc...) asparagine" evidence="1">
    <location>
        <position position="228"/>
    </location>
</feature>
<feature type="glycosylation site" description="N-linked (GlcNAc...) asparagine" evidence="1">
    <location>
        <position position="279"/>
    </location>
</feature>
<feature type="glycosylation site" description="N-linked (GlcNAc...) asparagine" evidence="1">
    <location>
        <position position="383"/>
    </location>
</feature>
<feature type="disulfide bond" evidence="2">
    <location>
        <begin position="193"/>
        <end position="394"/>
    </location>
</feature>
<protein>
    <recommendedName>
        <fullName>Olfactomedin</fullName>
    </recommendedName>
    <alternativeName>
        <fullName>Olfactory mucus protein</fullName>
    </alternativeName>
</protein>
<proteinExistence type="evidence at protein level"/>
<reference key="1">
    <citation type="journal article" date="1993" name="Proc. Natl. Acad. Sci. U.S.A.">
        <title>Molecular cloning of olfactomedin, an extracellular matrix protein specific to olfactory neuroepithelium.</title>
        <authorList>
            <person name="Yokoe H."/>
            <person name="Anholt R.R.H."/>
        </authorList>
    </citation>
    <scope>NUCLEOTIDE SEQUENCE [MRNA]</scope>
    <scope>PROTEIN SEQUENCE OF 17-33 AND 35-37</scope>
    <source>
        <tissue>Olfactory neuroepithelium</tissue>
    </source>
</reference>
<reference key="2">
    <citation type="journal article" date="1993" name="Biochemistry">
        <title>Formation of the extracellular mucous matrix of olfactory neuroepithelium: identification of partially glycosylated and nonglycosylated precursors of olfactomedin.</title>
        <authorList>
            <person name="Bal R.S."/>
            <person name="Anholt R.R.H."/>
        </authorList>
    </citation>
    <scope>PROTEIN SEQUENCE OF 17-37</scope>
    <scope>GLYCOSYLATION</scope>
    <source>
        <tissue>Olfactory neuroepithelium</tissue>
    </source>
</reference>
<comment type="function">
    <text>May influence the maintenance, growth, or differentiation of chemosensory cilia on the apical dendrites of olfactory neurons. Major component of the extracellular matrix of the olfactory neuroepithelium.</text>
</comment>
<comment type="subunit">
    <text>Oligomer; disulfide-linked.</text>
</comment>
<comment type="subcellular location">
    <subcellularLocation>
        <location>Secreted</location>
        <location>Extracellular space</location>
    </subcellularLocation>
</comment>
<comment type="tissue specificity">
    <text>Expressed exclusively in olfactory neuroepithelium.</text>
</comment>
<comment type="PTM">
    <text evidence="3">Most, if not all, of the six potential sites for N-glycosylation carry carbohydrate moieties of 8-10 sugar residues.</text>
</comment>